<keyword id="KW-0158">Chromosome</keyword>
<keyword id="KW-1185">Reference proteome</keyword>
<accession>Q9VS36</accession>
<accession>C9QPF9</accession>
<accession>Q9U626</accession>
<organism>
    <name type="scientific">Drosophila melanogaster</name>
    <name type="common">Fruit fly</name>
    <dbReference type="NCBI Taxonomy" id="7227"/>
    <lineage>
        <taxon>Eukaryota</taxon>
        <taxon>Metazoa</taxon>
        <taxon>Ecdysozoa</taxon>
        <taxon>Arthropoda</taxon>
        <taxon>Hexapoda</taxon>
        <taxon>Insecta</taxon>
        <taxon>Pterygota</taxon>
        <taxon>Neoptera</taxon>
        <taxon>Endopterygota</taxon>
        <taxon>Diptera</taxon>
        <taxon>Brachycera</taxon>
        <taxon>Muscomorpha</taxon>
        <taxon>Ephydroidea</taxon>
        <taxon>Drosophilidae</taxon>
        <taxon>Drosophila</taxon>
        <taxon>Sophophora</taxon>
    </lineage>
</organism>
<dbReference type="EMBL" id="AF199369">
    <property type="protein sequence ID" value="AAF09580.1"/>
    <property type="molecule type" value="Genomic_DNA"/>
</dbReference>
<dbReference type="EMBL" id="AE014296">
    <property type="protein sequence ID" value="AAF50593.2"/>
    <property type="molecule type" value="Genomic_DNA"/>
</dbReference>
<dbReference type="EMBL" id="BT100073">
    <property type="protein sequence ID" value="ACX61614.3"/>
    <property type="molecule type" value="mRNA"/>
</dbReference>
<dbReference type="RefSeq" id="NP_523956.1">
    <property type="nucleotide sequence ID" value="NM_079232.1"/>
</dbReference>
<dbReference type="FunCoup" id="Q9VS36">
    <property type="interactions" value="7"/>
</dbReference>
<dbReference type="IntAct" id="Q9VS36">
    <property type="interactions" value="10"/>
</dbReference>
<dbReference type="STRING" id="7227.FBpp0076547"/>
<dbReference type="PaxDb" id="7227-FBpp0076547"/>
<dbReference type="DNASU" id="38797"/>
<dbReference type="EnsemblMetazoa" id="FBtr0076836">
    <property type="protein sequence ID" value="FBpp0076547"/>
    <property type="gene ID" value="FBgn0016036"/>
</dbReference>
<dbReference type="GeneID" id="38797"/>
<dbReference type="KEGG" id="dme:Dmel_CG14827"/>
<dbReference type="UCSC" id="CG14827-RA">
    <property type="organism name" value="d. melanogaster"/>
</dbReference>
<dbReference type="AGR" id="FB:FBgn0016036"/>
<dbReference type="CTD" id="38797"/>
<dbReference type="FlyBase" id="FBgn0016036">
    <property type="gene designation" value="mei-P22"/>
</dbReference>
<dbReference type="VEuPathDB" id="VectorBase:FBgn0016036"/>
<dbReference type="eggNOG" id="ENOG502T97F">
    <property type="taxonomic scope" value="Eukaryota"/>
</dbReference>
<dbReference type="HOGENOM" id="CLU_861255_0_0_1"/>
<dbReference type="InParanoid" id="Q9VS36"/>
<dbReference type="OMA" id="QCTPKKR"/>
<dbReference type="OrthoDB" id="7858940at2759"/>
<dbReference type="PhylomeDB" id="Q9VS36"/>
<dbReference type="SignaLink" id="Q9VS36"/>
<dbReference type="BioGRID-ORCS" id="38797">
    <property type="hits" value="0 hits in 1 CRISPR screen"/>
</dbReference>
<dbReference type="GenomeRNAi" id="38797"/>
<dbReference type="PRO" id="PR:Q9VS36"/>
<dbReference type="Proteomes" id="UP000000803">
    <property type="component" value="Chromosome 3L"/>
</dbReference>
<dbReference type="Bgee" id="FBgn0016036">
    <property type="expression patterns" value="Expressed in egg cell and 1 other cell type or tissue"/>
</dbReference>
<dbReference type="ExpressionAtlas" id="Q9VS36">
    <property type="expression patterns" value="baseline and differential"/>
</dbReference>
<dbReference type="GO" id="GO:0000785">
    <property type="term" value="C:chromatin"/>
    <property type="evidence" value="ECO:0000314"/>
    <property type="project" value="FlyBase"/>
</dbReference>
<dbReference type="GO" id="GO:0007131">
    <property type="term" value="P:reciprocal meiotic recombination"/>
    <property type="evidence" value="ECO:0000315"/>
    <property type="project" value="FlyBase"/>
</dbReference>
<comment type="function">
    <text evidence="2">Required for formation of the mei-W68-mediated double-strand breaks (DSBs) that initiate meiotic recombination.</text>
</comment>
<comment type="interaction">
    <interactant intactId="EBI-102811">
        <id>Q9VS36</id>
    </interactant>
    <interactant intactId="EBI-198120">
        <id>P29310-2</id>
        <label>14-3-3zeta</label>
    </interactant>
    <organismsDiffer>false</organismsDiffer>
    <experiments>3</experiments>
</comment>
<comment type="subcellular location">
    <subcellularLocation>
        <location evidence="2">Chromosome</location>
    </subcellularLocation>
    <text evidence="2">Localizes to foci on meiotic chromosomes.</text>
</comment>
<comment type="induction">
    <text evidence="2">Expressed during early meiotic prophase.</text>
</comment>
<comment type="miscellaneous">
    <text evidence="5">Despite weak sequence similarities, may correspond to the subunit B of a mei-W68/spo11-containing topoisomerase 6 complex specifically required for meiotic recombination. Retains some of the structural features of the ancestral archaeal Top6B subunit (AC O05207).</text>
</comment>
<comment type="similarity">
    <text evidence="4">Belongs to the TOP6B-like family.</text>
</comment>
<protein>
    <recommendedName>
        <fullName evidence="3">Meiotic recombination protein P22</fullName>
    </recommendedName>
</protein>
<gene>
    <name evidence="3" type="primary">mei-P22</name>
    <name type="ORF">CG14827</name>
</gene>
<sequence>MDRTTVVPSPASTYCSFMGGSQHSPLRRSQRLIDKENRDLQKIPPKSLSPQLFGNTEDDYSELLLQQGKVVHLKPAAKLVPVRSSDNLVHLGSRDKVVPLKTSNRIVHLKPPYKIIHLKSLDEVEKTVKKKNNIQKEVHQRNSQRRSIQCTPKKRGRKPKQPAKKLQSRISTDQLGSTPSPSKLPAKYPAHFVHQLPPAEDSSCATRRRSLSAPAMQLSDLSLTPDEIQTPERRGEIVNKSPSDLDSDVSLNFSLSDSIGEIFGTKDISSILTMQRPRQYILLEEHLPTLATMLNVDLERLRCVLDITQGLSHEQILRFPIKHEEDELEVP</sequence>
<proteinExistence type="evidence at protein level"/>
<feature type="chain" id="PRO_0000436508" description="Meiotic recombination protein P22">
    <location>
        <begin position="1"/>
        <end position="331"/>
    </location>
</feature>
<feature type="region of interest" description="Disordered" evidence="1">
    <location>
        <begin position="132"/>
        <end position="187"/>
    </location>
</feature>
<feature type="compositionally biased region" description="Basic residues" evidence="1">
    <location>
        <begin position="152"/>
        <end position="167"/>
    </location>
</feature>
<feature type="compositionally biased region" description="Polar residues" evidence="1">
    <location>
        <begin position="168"/>
        <end position="181"/>
    </location>
</feature>
<feature type="sequence conflict" description="In Ref. 1; AAF09580." evidence="4" ref="1">
    <original>T</original>
    <variation>A</variation>
    <location>
        <position position="4"/>
    </location>
</feature>
<feature type="sequence conflict" description="In Ref. 1; AAF09580." evidence="4" ref="1">
    <original>P</original>
    <variation>S</variation>
    <location>
        <position position="112"/>
    </location>
</feature>
<feature type="sequence conflict" description="In Ref. 1; AAF09580." evidence="4" ref="1">
    <original>I</original>
    <variation>T</variation>
    <location>
        <position position="134"/>
    </location>
</feature>
<feature type="sequence conflict" description="In Ref. 1; AAF09580." evidence="4" ref="1">
    <original>S</original>
    <variation>N</variation>
    <location>
        <position position="177"/>
    </location>
</feature>
<feature type="sequence conflict" description="In Ref. 1; AAF09580." evidence="4" ref="1">
    <location>
        <begin position="200"/>
        <end position="212"/>
    </location>
</feature>
<feature type="sequence conflict" description="In Ref. 1; AAF09580." evidence="4" ref="1">
    <original>F</original>
    <variation>I</variation>
    <location>
        <position position="253"/>
    </location>
</feature>
<feature type="sequence conflict" description="In Ref. 1; AAF09580." evidence="4" ref="1">
    <original>P</original>
    <variation>S</variation>
    <location>
        <position position="331"/>
    </location>
</feature>
<reference key="1">
    <citation type="journal article" date="2002" name="Genetics">
        <title>mei-P22 encodes a chromosome-associated protein required for the initiation of meiotic recombination in Drosophila melanogaster.</title>
        <authorList>
            <person name="Liu H."/>
            <person name="Jang J.K."/>
            <person name="Kato N."/>
            <person name="McKim K.S."/>
        </authorList>
    </citation>
    <scope>NUCLEOTIDE SEQUENCE [GENOMIC DNA]</scope>
    <scope>FUNCTION</scope>
    <scope>SUBCELLULAR LOCATION</scope>
    <scope>INDUCTION</scope>
</reference>
<reference key="2">
    <citation type="journal article" date="2000" name="Science">
        <title>The genome sequence of Drosophila melanogaster.</title>
        <authorList>
            <person name="Adams M.D."/>
            <person name="Celniker S.E."/>
            <person name="Holt R.A."/>
            <person name="Evans C.A."/>
            <person name="Gocayne J.D."/>
            <person name="Amanatides P.G."/>
            <person name="Scherer S.E."/>
            <person name="Li P.W."/>
            <person name="Hoskins R.A."/>
            <person name="Galle R.F."/>
            <person name="George R.A."/>
            <person name="Lewis S.E."/>
            <person name="Richards S."/>
            <person name="Ashburner M."/>
            <person name="Henderson S.N."/>
            <person name="Sutton G.G."/>
            <person name="Wortman J.R."/>
            <person name="Yandell M.D."/>
            <person name="Zhang Q."/>
            <person name="Chen L.X."/>
            <person name="Brandon R.C."/>
            <person name="Rogers Y.-H.C."/>
            <person name="Blazej R.G."/>
            <person name="Champe M."/>
            <person name="Pfeiffer B.D."/>
            <person name="Wan K.H."/>
            <person name="Doyle C."/>
            <person name="Baxter E.G."/>
            <person name="Helt G."/>
            <person name="Nelson C.R."/>
            <person name="Miklos G.L.G."/>
            <person name="Abril J.F."/>
            <person name="Agbayani A."/>
            <person name="An H.-J."/>
            <person name="Andrews-Pfannkoch C."/>
            <person name="Baldwin D."/>
            <person name="Ballew R.M."/>
            <person name="Basu A."/>
            <person name="Baxendale J."/>
            <person name="Bayraktaroglu L."/>
            <person name="Beasley E.M."/>
            <person name="Beeson K.Y."/>
            <person name="Benos P.V."/>
            <person name="Berman B.P."/>
            <person name="Bhandari D."/>
            <person name="Bolshakov S."/>
            <person name="Borkova D."/>
            <person name="Botchan M.R."/>
            <person name="Bouck J."/>
            <person name="Brokstein P."/>
            <person name="Brottier P."/>
            <person name="Burtis K.C."/>
            <person name="Busam D.A."/>
            <person name="Butler H."/>
            <person name="Cadieu E."/>
            <person name="Center A."/>
            <person name="Chandra I."/>
            <person name="Cherry J.M."/>
            <person name="Cawley S."/>
            <person name="Dahlke C."/>
            <person name="Davenport L.B."/>
            <person name="Davies P."/>
            <person name="de Pablos B."/>
            <person name="Delcher A."/>
            <person name="Deng Z."/>
            <person name="Mays A.D."/>
            <person name="Dew I."/>
            <person name="Dietz S.M."/>
            <person name="Dodson K."/>
            <person name="Doup L.E."/>
            <person name="Downes M."/>
            <person name="Dugan-Rocha S."/>
            <person name="Dunkov B.C."/>
            <person name="Dunn P."/>
            <person name="Durbin K.J."/>
            <person name="Evangelista C.C."/>
            <person name="Ferraz C."/>
            <person name="Ferriera S."/>
            <person name="Fleischmann W."/>
            <person name="Fosler C."/>
            <person name="Gabrielian A.E."/>
            <person name="Garg N.S."/>
            <person name="Gelbart W.M."/>
            <person name="Glasser K."/>
            <person name="Glodek A."/>
            <person name="Gong F."/>
            <person name="Gorrell J.H."/>
            <person name="Gu Z."/>
            <person name="Guan P."/>
            <person name="Harris M."/>
            <person name="Harris N.L."/>
            <person name="Harvey D.A."/>
            <person name="Heiman T.J."/>
            <person name="Hernandez J.R."/>
            <person name="Houck J."/>
            <person name="Hostin D."/>
            <person name="Houston K.A."/>
            <person name="Howland T.J."/>
            <person name="Wei M.-H."/>
            <person name="Ibegwam C."/>
            <person name="Jalali M."/>
            <person name="Kalush F."/>
            <person name="Karpen G.H."/>
            <person name="Ke Z."/>
            <person name="Kennison J.A."/>
            <person name="Ketchum K.A."/>
            <person name="Kimmel B.E."/>
            <person name="Kodira C.D."/>
            <person name="Kraft C.L."/>
            <person name="Kravitz S."/>
            <person name="Kulp D."/>
            <person name="Lai Z."/>
            <person name="Lasko P."/>
            <person name="Lei Y."/>
            <person name="Levitsky A.A."/>
            <person name="Li J.H."/>
            <person name="Li Z."/>
            <person name="Liang Y."/>
            <person name="Lin X."/>
            <person name="Liu X."/>
            <person name="Mattei B."/>
            <person name="McIntosh T.C."/>
            <person name="McLeod M.P."/>
            <person name="McPherson D."/>
            <person name="Merkulov G."/>
            <person name="Milshina N.V."/>
            <person name="Mobarry C."/>
            <person name="Morris J."/>
            <person name="Moshrefi A."/>
            <person name="Mount S.M."/>
            <person name="Moy M."/>
            <person name="Murphy B."/>
            <person name="Murphy L."/>
            <person name="Muzny D.M."/>
            <person name="Nelson D.L."/>
            <person name="Nelson D.R."/>
            <person name="Nelson K.A."/>
            <person name="Nixon K."/>
            <person name="Nusskern D.R."/>
            <person name="Pacleb J.M."/>
            <person name="Palazzolo M."/>
            <person name="Pittman G.S."/>
            <person name="Pan S."/>
            <person name="Pollard J."/>
            <person name="Puri V."/>
            <person name="Reese M.G."/>
            <person name="Reinert K."/>
            <person name="Remington K."/>
            <person name="Saunders R.D.C."/>
            <person name="Scheeler F."/>
            <person name="Shen H."/>
            <person name="Shue B.C."/>
            <person name="Siden-Kiamos I."/>
            <person name="Simpson M."/>
            <person name="Skupski M.P."/>
            <person name="Smith T.J."/>
            <person name="Spier E."/>
            <person name="Spradling A.C."/>
            <person name="Stapleton M."/>
            <person name="Strong R."/>
            <person name="Sun E."/>
            <person name="Svirskas R."/>
            <person name="Tector C."/>
            <person name="Turner R."/>
            <person name="Venter E."/>
            <person name="Wang A.H."/>
            <person name="Wang X."/>
            <person name="Wang Z.-Y."/>
            <person name="Wassarman D.A."/>
            <person name="Weinstock G.M."/>
            <person name="Weissenbach J."/>
            <person name="Williams S.M."/>
            <person name="Woodage T."/>
            <person name="Worley K.C."/>
            <person name="Wu D."/>
            <person name="Yang S."/>
            <person name="Yao Q.A."/>
            <person name="Ye J."/>
            <person name="Yeh R.-F."/>
            <person name="Zaveri J.S."/>
            <person name="Zhan M."/>
            <person name="Zhang G."/>
            <person name="Zhao Q."/>
            <person name="Zheng L."/>
            <person name="Zheng X.H."/>
            <person name="Zhong F.N."/>
            <person name="Zhong W."/>
            <person name="Zhou X."/>
            <person name="Zhu S.C."/>
            <person name="Zhu X."/>
            <person name="Smith H.O."/>
            <person name="Gibbs R.A."/>
            <person name="Myers E.W."/>
            <person name="Rubin G.M."/>
            <person name="Venter J.C."/>
        </authorList>
    </citation>
    <scope>NUCLEOTIDE SEQUENCE [LARGE SCALE GENOMIC DNA]</scope>
    <source>
        <strain>Berkeley</strain>
    </source>
</reference>
<reference key="3">
    <citation type="journal article" date="2002" name="Genome Biol.">
        <title>Annotation of the Drosophila melanogaster euchromatic genome: a systematic review.</title>
        <authorList>
            <person name="Misra S."/>
            <person name="Crosby M.A."/>
            <person name="Mungall C.J."/>
            <person name="Matthews B.B."/>
            <person name="Campbell K.S."/>
            <person name="Hradecky P."/>
            <person name="Huang Y."/>
            <person name="Kaminker J.S."/>
            <person name="Millburn G.H."/>
            <person name="Prochnik S.E."/>
            <person name="Smith C.D."/>
            <person name="Tupy J.L."/>
            <person name="Whitfield E.J."/>
            <person name="Bayraktaroglu L."/>
            <person name="Berman B.P."/>
            <person name="Bettencourt B.R."/>
            <person name="Celniker S.E."/>
            <person name="de Grey A.D.N.J."/>
            <person name="Drysdale R.A."/>
            <person name="Harris N.L."/>
            <person name="Richter J."/>
            <person name="Russo S."/>
            <person name="Schroeder A.J."/>
            <person name="Shu S.Q."/>
            <person name="Stapleton M."/>
            <person name="Yamada C."/>
            <person name="Ashburner M."/>
            <person name="Gelbart W.M."/>
            <person name="Rubin G.M."/>
            <person name="Lewis S.E."/>
        </authorList>
    </citation>
    <scope>GENOME REANNOTATION</scope>
    <source>
        <strain>Berkeley</strain>
    </source>
</reference>
<reference key="4">
    <citation type="submission" date="2010-02" db="EMBL/GenBank/DDBJ databases">
        <authorList>
            <person name="Carlson J."/>
            <person name="Booth B."/>
            <person name="Frise E."/>
            <person name="Park S."/>
            <person name="Wan K."/>
            <person name="Yu C."/>
            <person name="Celniker S.E."/>
        </authorList>
    </citation>
    <scope>NUCLEOTIDE SEQUENCE [LARGE SCALE MRNA]</scope>
</reference>
<reference key="5">
    <citation type="journal article" date="2016" name="Science">
        <title>The TopoVIB-Like protein family is required for meiotic DNA double-strand break formation.</title>
        <authorList>
            <person name="Robert T."/>
            <person name="Nore A."/>
            <person name="Brun C."/>
            <person name="Maffre C."/>
            <person name="Crimi B."/>
            <person name="Bourbon H.M."/>
            <person name="de Massy B."/>
        </authorList>
    </citation>
    <scope>IDENTIFICATION</scope>
</reference>
<name>TO6BL_DROME</name>
<evidence type="ECO:0000256" key="1">
    <source>
        <dbReference type="SAM" id="MobiDB-lite"/>
    </source>
</evidence>
<evidence type="ECO:0000269" key="2">
    <source>
    </source>
</evidence>
<evidence type="ECO:0000303" key="3">
    <source>
    </source>
</evidence>
<evidence type="ECO:0000305" key="4"/>
<evidence type="ECO:0000305" key="5">
    <source>
    </source>
</evidence>